<accession>Q7MWM0</accession>
<sequence>MSTYQPEDTRKVTTHRLIEMKSRGEKISMLTAYDYSMAKLVDEAGMDVILVGDSASNVMAGNVTTLPITLDQMIYHGKSVVKAVKRALVVVDLPFGSYQGNSKEALCSAIRVMKETHADCIKLEGGEEVRESIVRILSAGIPIMGHLGLMPQSINKFGTYNVRAKEEAEAEKLLQDAHLLEELGCFALVLEKIPAELATRVASELSIPVIGIGAGGGVDGQVLVMHDMLGITEGFSPRFLRRYANLANEIDRALKHYIADVKSMDFPNKDEQY</sequence>
<protein>
    <recommendedName>
        <fullName evidence="1">3-methyl-2-oxobutanoate hydroxymethyltransferase</fullName>
        <ecNumber evidence="1">2.1.2.11</ecNumber>
    </recommendedName>
    <alternativeName>
        <fullName evidence="1">Ketopantoate hydroxymethyltransferase</fullName>
        <shortName evidence="1">KPHMT</shortName>
    </alternativeName>
</protein>
<proteinExistence type="inferred from homology"/>
<name>PANB_PORGI</name>
<gene>
    <name evidence="1" type="primary">panB</name>
    <name type="ordered locus">PG_0588</name>
</gene>
<reference key="1">
    <citation type="journal article" date="2003" name="J. Bacteriol.">
        <title>Complete genome sequence of the oral pathogenic bacterium Porphyromonas gingivalis strain W83.</title>
        <authorList>
            <person name="Nelson K.E."/>
            <person name="Fleischmann R.D."/>
            <person name="DeBoy R.T."/>
            <person name="Paulsen I.T."/>
            <person name="Fouts D.E."/>
            <person name="Eisen J.A."/>
            <person name="Daugherty S.C."/>
            <person name="Dodson R.J."/>
            <person name="Durkin A.S."/>
            <person name="Gwinn M.L."/>
            <person name="Haft D.H."/>
            <person name="Kolonay J.F."/>
            <person name="Nelson W.C."/>
            <person name="Mason T.M."/>
            <person name="Tallon L."/>
            <person name="Gray J."/>
            <person name="Granger D."/>
            <person name="Tettelin H."/>
            <person name="Dong H."/>
            <person name="Galvin J.L."/>
            <person name="Duncan M.J."/>
            <person name="Dewhirst F.E."/>
            <person name="Fraser C.M."/>
        </authorList>
    </citation>
    <scope>NUCLEOTIDE SEQUENCE [LARGE SCALE GENOMIC DNA]</scope>
    <source>
        <strain>ATCC BAA-308 / W83</strain>
    </source>
</reference>
<keyword id="KW-0963">Cytoplasm</keyword>
<keyword id="KW-0460">Magnesium</keyword>
<keyword id="KW-0479">Metal-binding</keyword>
<keyword id="KW-0566">Pantothenate biosynthesis</keyword>
<keyword id="KW-1185">Reference proteome</keyword>
<keyword id="KW-0808">Transferase</keyword>
<dbReference type="EC" id="2.1.2.11" evidence="1"/>
<dbReference type="EMBL" id="AE015924">
    <property type="protein sequence ID" value="AAQ65774.1"/>
    <property type="molecule type" value="Genomic_DNA"/>
</dbReference>
<dbReference type="RefSeq" id="WP_004585127.1">
    <property type="nucleotide sequence ID" value="NC_002950.2"/>
</dbReference>
<dbReference type="SMR" id="Q7MWM0"/>
<dbReference type="STRING" id="242619.PG_0588"/>
<dbReference type="EnsemblBacteria" id="AAQ65774">
    <property type="protein sequence ID" value="AAQ65774"/>
    <property type="gene ID" value="PG_0588"/>
</dbReference>
<dbReference type="GeneID" id="29255860"/>
<dbReference type="KEGG" id="pgi:PG_0588"/>
<dbReference type="eggNOG" id="COG0413">
    <property type="taxonomic scope" value="Bacteria"/>
</dbReference>
<dbReference type="HOGENOM" id="CLU_036645_1_0_10"/>
<dbReference type="UniPathway" id="UPA00028">
    <property type="reaction ID" value="UER00003"/>
</dbReference>
<dbReference type="Proteomes" id="UP000000588">
    <property type="component" value="Chromosome"/>
</dbReference>
<dbReference type="GO" id="GO:0005737">
    <property type="term" value="C:cytoplasm"/>
    <property type="evidence" value="ECO:0007669"/>
    <property type="project" value="UniProtKB-SubCell"/>
</dbReference>
<dbReference type="GO" id="GO:0003864">
    <property type="term" value="F:3-methyl-2-oxobutanoate hydroxymethyltransferase activity"/>
    <property type="evidence" value="ECO:0007669"/>
    <property type="project" value="UniProtKB-UniRule"/>
</dbReference>
<dbReference type="GO" id="GO:0000287">
    <property type="term" value="F:magnesium ion binding"/>
    <property type="evidence" value="ECO:0007669"/>
    <property type="project" value="TreeGrafter"/>
</dbReference>
<dbReference type="GO" id="GO:0015940">
    <property type="term" value="P:pantothenate biosynthetic process"/>
    <property type="evidence" value="ECO:0007669"/>
    <property type="project" value="UniProtKB-UniRule"/>
</dbReference>
<dbReference type="CDD" id="cd06557">
    <property type="entry name" value="KPHMT-like"/>
    <property type="match status" value="1"/>
</dbReference>
<dbReference type="FunFam" id="3.20.20.60:FF:000017">
    <property type="entry name" value="3-methyl-2-oxobutanoate hydroxymethyltransferase"/>
    <property type="match status" value="1"/>
</dbReference>
<dbReference type="Gene3D" id="3.20.20.60">
    <property type="entry name" value="Phosphoenolpyruvate-binding domains"/>
    <property type="match status" value="1"/>
</dbReference>
<dbReference type="HAMAP" id="MF_00156">
    <property type="entry name" value="PanB"/>
    <property type="match status" value="1"/>
</dbReference>
<dbReference type="InterPro" id="IPR003700">
    <property type="entry name" value="Pantoate_hydroxy_MeTrfase"/>
</dbReference>
<dbReference type="InterPro" id="IPR015813">
    <property type="entry name" value="Pyrv/PenolPyrv_kinase-like_dom"/>
</dbReference>
<dbReference type="InterPro" id="IPR040442">
    <property type="entry name" value="Pyrv_kinase-like_dom_sf"/>
</dbReference>
<dbReference type="NCBIfam" id="TIGR00222">
    <property type="entry name" value="panB"/>
    <property type="match status" value="1"/>
</dbReference>
<dbReference type="NCBIfam" id="NF001452">
    <property type="entry name" value="PRK00311.1"/>
    <property type="match status" value="1"/>
</dbReference>
<dbReference type="PANTHER" id="PTHR20881">
    <property type="entry name" value="3-METHYL-2-OXOBUTANOATE HYDROXYMETHYLTRANSFERASE"/>
    <property type="match status" value="1"/>
</dbReference>
<dbReference type="PANTHER" id="PTHR20881:SF0">
    <property type="entry name" value="3-METHYL-2-OXOBUTANOATE HYDROXYMETHYLTRANSFERASE"/>
    <property type="match status" value="1"/>
</dbReference>
<dbReference type="Pfam" id="PF02548">
    <property type="entry name" value="Pantoate_transf"/>
    <property type="match status" value="1"/>
</dbReference>
<dbReference type="PIRSF" id="PIRSF000388">
    <property type="entry name" value="Pantoate_hydroxy_MeTrfase"/>
    <property type="match status" value="1"/>
</dbReference>
<dbReference type="SUPFAM" id="SSF51621">
    <property type="entry name" value="Phosphoenolpyruvate/pyruvate domain"/>
    <property type="match status" value="1"/>
</dbReference>
<comment type="function">
    <text evidence="1">Catalyzes the reversible reaction in which hydroxymethyl group from 5,10-methylenetetrahydrofolate is transferred onto alpha-ketoisovalerate to form ketopantoate.</text>
</comment>
<comment type="catalytic activity">
    <reaction evidence="1">
        <text>3-methyl-2-oxobutanoate + (6R)-5,10-methylene-5,6,7,8-tetrahydrofolate + H2O = 2-dehydropantoate + (6S)-5,6,7,8-tetrahydrofolate</text>
        <dbReference type="Rhea" id="RHEA:11824"/>
        <dbReference type="ChEBI" id="CHEBI:11561"/>
        <dbReference type="ChEBI" id="CHEBI:11851"/>
        <dbReference type="ChEBI" id="CHEBI:15377"/>
        <dbReference type="ChEBI" id="CHEBI:15636"/>
        <dbReference type="ChEBI" id="CHEBI:57453"/>
        <dbReference type="EC" id="2.1.2.11"/>
    </reaction>
</comment>
<comment type="cofactor">
    <cofactor evidence="1">
        <name>Mg(2+)</name>
        <dbReference type="ChEBI" id="CHEBI:18420"/>
    </cofactor>
    <text evidence="1">Binds 1 Mg(2+) ion per subunit.</text>
</comment>
<comment type="pathway">
    <text evidence="1">Cofactor biosynthesis; (R)-pantothenate biosynthesis; (R)-pantoate from 3-methyl-2-oxobutanoate: step 1/2.</text>
</comment>
<comment type="subunit">
    <text evidence="1">Homodecamer; pentamer of dimers.</text>
</comment>
<comment type="subcellular location">
    <subcellularLocation>
        <location evidence="1">Cytoplasm</location>
    </subcellularLocation>
</comment>
<comment type="similarity">
    <text evidence="1">Belongs to the PanB family.</text>
</comment>
<feature type="chain" id="PRO_0000184873" description="3-methyl-2-oxobutanoate hydroxymethyltransferase">
    <location>
        <begin position="1"/>
        <end position="273"/>
    </location>
</feature>
<feature type="active site" description="Proton acceptor" evidence="1">
    <location>
        <position position="191"/>
    </location>
</feature>
<feature type="binding site" evidence="1">
    <location>
        <begin position="53"/>
        <end position="54"/>
    </location>
    <ligand>
        <name>3-methyl-2-oxobutanoate</name>
        <dbReference type="ChEBI" id="CHEBI:11851"/>
    </ligand>
</feature>
<feature type="binding site" evidence="1">
    <location>
        <position position="53"/>
    </location>
    <ligand>
        <name>Mg(2+)</name>
        <dbReference type="ChEBI" id="CHEBI:18420"/>
    </ligand>
</feature>
<feature type="binding site" evidence="1">
    <location>
        <position position="92"/>
    </location>
    <ligand>
        <name>3-methyl-2-oxobutanoate</name>
        <dbReference type="ChEBI" id="CHEBI:11851"/>
    </ligand>
</feature>
<feature type="binding site" evidence="1">
    <location>
        <position position="92"/>
    </location>
    <ligand>
        <name>Mg(2+)</name>
        <dbReference type="ChEBI" id="CHEBI:18420"/>
    </ligand>
</feature>
<feature type="binding site" evidence="1">
    <location>
        <position position="122"/>
    </location>
    <ligand>
        <name>3-methyl-2-oxobutanoate</name>
        <dbReference type="ChEBI" id="CHEBI:11851"/>
    </ligand>
</feature>
<feature type="binding site" evidence="1">
    <location>
        <position position="124"/>
    </location>
    <ligand>
        <name>Mg(2+)</name>
        <dbReference type="ChEBI" id="CHEBI:18420"/>
    </ligand>
</feature>
<organism>
    <name type="scientific">Porphyromonas gingivalis (strain ATCC BAA-308 / W83)</name>
    <dbReference type="NCBI Taxonomy" id="242619"/>
    <lineage>
        <taxon>Bacteria</taxon>
        <taxon>Pseudomonadati</taxon>
        <taxon>Bacteroidota</taxon>
        <taxon>Bacteroidia</taxon>
        <taxon>Bacteroidales</taxon>
        <taxon>Porphyromonadaceae</taxon>
        <taxon>Porphyromonas</taxon>
    </lineage>
</organism>
<evidence type="ECO:0000255" key="1">
    <source>
        <dbReference type="HAMAP-Rule" id="MF_00156"/>
    </source>
</evidence>